<reference key="1">
    <citation type="submission" date="1999-02" db="EMBL/GenBank/DDBJ databases">
        <title>Photorhabdus luminescens genomic region homologous to 4.0 minute Escherichia coli region promotes pleiotropic phenotypes.</title>
        <authorList>
            <person name="Chatonnet-Marton P.I."/>
            <person name="Givaudan A."/>
            <person name="Lanois A."/>
            <person name="Boemare N.E."/>
        </authorList>
    </citation>
    <scope>NUCLEOTIDE SEQUENCE [GENOMIC DNA]</scope>
    <source>
        <strain>Hm</strain>
    </source>
</reference>
<gene>
    <name type="primary">rseP</name>
</gene>
<name>RSEP_PHOLU</name>
<organism>
    <name type="scientific">Photorhabdus luminescens</name>
    <name type="common">Xenorhabdus luminescens</name>
    <dbReference type="NCBI Taxonomy" id="29488"/>
    <lineage>
        <taxon>Bacteria</taxon>
        <taxon>Pseudomonadati</taxon>
        <taxon>Pseudomonadota</taxon>
        <taxon>Gammaproteobacteria</taxon>
        <taxon>Enterobacterales</taxon>
        <taxon>Morganellaceae</taxon>
        <taxon>Photorhabdus</taxon>
    </lineage>
</organism>
<proteinExistence type="inferred from homology"/>
<evidence type="ECO:0000250" key="1"/>
<evidence type="ECO:0000255" key="2"/>
<evidence type="ECO:0000255" key="3">
    <source>
        <dbReference type="PROSITE-ProRule" id="PRU00143"/>
    </source>
</evidence>
<evidence type="ECO:0000305" key="4"/>
<keyword id="KW-0997">Cell inner membrane</keyword>
<keyword id="KW-1003">Cell membrane</keyword>
<keyword id="KW-0378">Hydrolase</keyword>
<keyword id="KW-0472">Membrane</keyword>
<keyword id="KW-0482">Metalloprotease</keyword>
<keyword id="KW-0645">Protease</keyword>
<keyword id="KW-0812">Transmembrane</keyword>
<keyword id="KW-1133">Transmembrane helix</keyword>
<keyword id="KW-0862">Zinc</keyword>
<protein>
    <recommendedName>
        <fullName>Protease RseP</fullName>
        <ecNumber>3.4.24.-</ecNumber>
    </recommendedName>
    <alternativeName>
        <fullName>S2P endopeptidase</fullName>
    </alternativeName>
    <alternativeName>
        <fullName>Site-2 protease RseP</fullName>
        <shortName>S2P protease RseP</shortName>
    </alternativeName>
    <alternativeName>
        <fullName>Site-2-type intramembrane protease</fullName>
    </alternativeName>
</protein>
<sequence length="226" mass="24535">VEKVIPGSAAEKAGLQKGDRIVKVGSQEIDVWHTFTSFVSNNPNVPLELSVDRAGHIISLSMTPEVRQQSGGRKVGFAGVELRIVPLADEYKIVQQYGPFSAMYQAGDKTWQLMRLTVSMIGKLIVGDVKINNLSGPISIAKGAGVSADSGLVYYLMFLALISVNLGIINLIPLPVLDGGHLLFLFIEKIKGGPVSERVQDFSYRIGAMILVLLMGLALFNDFSRF</sequence>
<dbReference type="EC" id="3.4.24.-"/>
<dbReference type="EMBL" id="AJ236920">
    <property type="protein sequence ID" value="CAB51928.1"/>
    <property type="molecule type" value="Genomic_DNA"/>
</dbReference>
<dbReference type="SMR" id="Q9S342"/>
<dbReference type="STRING" id="29488.KS18_15810"/>
<dbReference type="MEROPS" id="M50.004"/>
<dbReference type="GO" id="GO:0005886">
    <property type="term" value="C:plasma membrane"/>
    <property type="evidence" value="ECO:0007669"/>
    <property type="project" value="UniProtKB-SubCell"/>
</dbReference>
<dbReference type="GO" id="GO:0004222">
    <property type="term" value="F:metalloendopeptidase activity"/>
    <property type="evidence" value="ECO:0007669"/>
    <property type="project" value="InterPro"/>
</dbReference>
<dbReference type="GO" id="GO:0006508">
    <property type="term" value="P:proteolysis"/>
    <property type="evidence" value="ECO:0007669"/>
    <property type="project" value="UniProtKB-KW"/>
</dbReference>
<dbReference type="CDD" id="cd06163">
    <property type="entry name" value="S2P-M50_PDZ_RseP-like"/>
    <property type="match status" value="1"/>
</dbReference>
<dbReference type="Gene3D" id="2.30.42.10">
    <property type="match status" value="1"/>
</dbReference>
<dbReference type="InterPro" id="IPR001478">
    <property type="entry name" value="PDZ"/>
</dbReference>
<dbReference type="InterPro" id="IPR041489">
    <property type="entry name" value="PDZ_6"/>
</dbReference>
<dbReference type="InterPro" id="IPR036034">
    <property type="entry name" value="PDZ_sf"/>
</dbReference>
<dbReference type="InterPro" id="IPR004387">
    <property type="entry name" value="Pept_M50_Zn"/>
</dbReference>
<dbReference type="InterPro" id="IPR008915">
    <property type="entry name" value="Peptidase_M50"/>
</dbReference>
<dbReference type="NCBIfam" id="TIGR00054">
    <property type="entry name" value="RIP metalloprotease RseP"/>
    <property type="match status" value="1"/>
</dbReference>
<dbReference type="PANTHER" id="PTHR42837:SF2">
    <property type="entry name" value="MEMBRANE METALLOPROTEASE ARASP2, CHLOROPLASTIC-RELATED"/>
    <property type="match status" value="1"/>
</dbReference>
<dbReference type="PANTHER" id="PTHR42837">
    <property type="entry name" value="REGULATOR OF SIGMA-E PROTEASE RSEP"/>
    <property type="match status" value="1"/>
</dbReference>
<dbReference type="Pfam" id="PF17820">
    <property type="entry name" value="PDZ_6"/>
    <property type="match status" value="1"/>
</dbReference>
<dbReference type="Pfam" id="PF02163">
    <property type="entry name" value="Peptidase_M50"/>
    <property type="match status" value="1"/>
</dbReference>
<dbReference type="SUPFAM" id="SSF50156">
    <property type="entry name" value="PDZ domain-like"/>
    <property type="match status" value="1"/>
</dbReference>
<dbReference type="PROSITE" id="PS50106">
    <property type="entry name" value="PDZ"/>
    <property type="match status" value="1"/>
</dbReference>
<accession>Q9S342</accession>
<comment type="function">
    <text evidence="1">A site-2 regulated intramembrane protease (S2P) that cleaves the peptide bond between 'Ala-108' and 'Cys-109' in the transmembrane region of RseA. Part of a regulated intramembrane proteolysis (RIP) cascade. Acts on DegS-cleaved RseA to release the cytoplasmic domain of RseA. This provides the cell with sigma-E (RpoE) activity through the proteolysis of RseA (By similarity).</text>
</comment>
<comment type="cofactor">
    <cofactor evidence="1">
        <name>Zn(2+)</name>
        <dbReference type="ChEBI" id="CHEBI:29105"/>
    </cofactor>
</comment>
<comment type="subunit">
    <text evidence="1">Interacts with RseA.</text>
</comment>
<comment type="subcellular location">
    <subcellularLocation>
        <location evidence="1">Cell inner membrane</location>
        <topology evidence="1">Multi-pass membrane protein</topology>
    </subcellularLocation>
</comment>
<comment type="domain">
    <text evidence="1">The 2 circularly premutated PDZ domains act to negatively regulate protease action on intact RseA.</text>
</comment>
<comment type="miscellaneous">
    <text evidence="1">Regulated intramembrane proteolysis (RIP) occurs when an extracytoplasmic signal triggers a concerted proteolytic cascade to transmit information and elicit cellular responses. A membrane-spanning regulatory substrate protein is first cut extracytoplasmically (site-1 protease, S1P), then within the membrane itself (site-2 protease, S2P, this enzyme), while cytoplasmic proteases finish degrading the regulatory protein, liberating the effector protein (By similarity).</text>
</comment>
<comment type="similarity">
    <text evidence="4">Belongs to the peptidase M50B family.</text>
</comment>
<feature type="chain" id="PRO_0000088419" description="Protease RseP">
    <location>
        <begin position="1" status="less than"/>
        <end position="226"/>
    </location>
</feature>
<feature type="transmembrane region" description="Helical" evidence="2">
    <location>
        <begin position="152"/>
        <end position="174"/>
    </location>
</feature>
<feature type="transmembrane region" description="Helical" evidence="2">
    <location>
        <begin position="202"/>
        <end position="221"/>
    </location>
</feature>
<feature type="domain" description="PDZ" evidence="3">
    <location>
        <begin position="1" status="less than"/>
        <end position="56"/>
    </location>
</feature>
<feature type="non-terminal residue">
    <location>
        <position position="1"/>
    </location>
</feature>